<accession>B8FRS7</accession>
<proteinExistence type="inferred from homology"/>
<feature type="chain" id="PRO_1000201888" description="Phosphate acyltransferase">
    <location>
        <begin position="1"/>
        <end position="334"/>
    </location>
</feature>
<keyword id="KW-0963">Cytoplasm</keyword>
<keyword id="KW-0444">Lipid biosynthesis</keyword>
<keyword id="KW-0443">Lipid metabolism</keyword>
<keyword id="KW-0594">Phospholipid biosynthesis</keyword>
<keyword id="KW-1208">Phospholipid metabolism</keyword>
<keyword id="KW-0808">Transferase</keyword>
<dbReference type="EC" id="2.3.1.274" evidence="1"/>
<dbReference type="EMBL" id="CP001336">
    <property type="protein sequence ID" value="ACL21837.1"/>
    <property type="molecule type" value="Genomic_DNA"/>
</dbReference>
<dbReference type="RefSeq" id="WP_015944818.1">
    <property type="nucleotide sequence ID" value="NC_011830.1"/>
</dbReference>
<dbReference type="SMR" id="B8FRS7"/>
<dbReference type="KEGG" id="dhd:Dhaf_3821"/>
<dbReference type="HOGENOM" id="CLU_039379_1_1_9"/>
<dbReference type="UniPathway" id="UPA00085"/>
<dbReference type="Proteomes" id="UP000007726">
    <property type="component" value="Chromosome"/>
</dbReference>
<dbReference type="GO" id="GO:0005737">
    <property type="term" value="C:cytoplasm"/>
    <property type="evidence" value="ECO:0007669"/>
    <property type="project" value="UniProtKB-SubCell"/>
</dbReference>
<dbReference type="GO" id="GO:0043811">
    <property type="term" value="F:phosphate:acyl-[acyl carrier protein] acyltransferase activity"/>
    <property type="evidence" value="ECO:0007669"/>
    <property type="project" value="UniProtKB-UniRule"/>
</dbReference>
<dbReference type="GO" id="GO:0006633">
    <property type="term" value="P:fatty acid biosynthetic process"/>
    <property type="evidence" value="ECO:0007669"/>
    <property type="project" value="UniProtKB-UniRule"/>
</dbReference>
<dbReference type="GO" id="GO:0008654">
    <property type="term" value="P:phospholipid biosynthetic process"/>
    <property type="evidence" value="ECO:0007669"/>
    <property type="project" value="UniProtKB-KW"/>
</dbReference>
<dbReference type="Gene3D" id="3.40.718.10">
    <property type="entry name" value="Isopropylmalate Dehydrogenase"/>
    <property type="match status" value="1"/>
</dbReference>
<dbReference type="HAMAP" id="MF_00019">
    <property type="entry name" value="PlsX"/>
    <property type="match status" value="1"/>
</dbReference>
<dbReference type="InterPro" id="IPR003664">
    <property type="entry name" value="FA_synthesis"/>
</dbReference>
<dbReference type="InterPro" id="IPR012281">
    <property type="entry name" value="Phospholipid_synth_PlsX-like"/>
</dbReference>
<dbReference type="NCBIfam" id="TIGR00182">
    <property type="entry name" value="plsX"/>
    <property type="match status" value="1"/>
</dbReference>
<dbReference type="PANTHER" id="PTHR30100">
    <property type="entry name" value="FATTY ACID/PHOSPHOLIPID SYNTHESIS PROTEIN PLSX"/>
    <property type="match status" value="1"/>
</dbReference>
<dbReference type="PANTHER" id="PTHR30100:SF1">
    <property type="entry name" value="PHOSPHATE ACYLTRANSFERASE"/>
    <property type="match status" value="1"/>
</dbReference>
<dbReference type="Pfam" id="PF02504">
    <property type="entry name" value="FA_synthesis"/>
    <property type="match status" value="1"/>
</dbReference>
<dbReference type="PIRSF" id="PIRSF002465">
    <property type="entry name" value="Phsphlp_syn_PlsX"/>
    <property type="match status" value="1"/>
</dbReference>
<dbReference type="SUPFAM" id="SSF53659">
    <property type="entry name" value="Isocitrate/Isopropylmalate dehydrogenase-like"/>
    <property type="match status" value="1"/>
</dbReference>
<reference key="1">
    <citation type="journal article" date="2012" name="BMC Microbiol.">
        <title>Genome sequence of Desulfitobacterium hafniense DCB-2, a Gram-positive anaerobe capable of dehalogenation and metal reduction.</title>
        <authorList>
            <person name="Kim S.H."/>
            <person name="Harzman C."/>
            <person name="Davis J.K."/>
            <person name="Hutcheson R."/>
            <person name="Broderick J.B."/>
            <person name="Marsh T.L."/>
            <person name="Tiedje J.M."/>
        </authorList>
    </citation>
    <scope>NUCLEOTIDE SEQUENCE [LARGE SCALE GENOMIC DNA]</scope>
    <source>
        <strain>DSM 10664 / DCB-2</strain>
    </source>
</reference>
<protein>
    <recommendedName>
        <fullName evidence="1">Phosphate acyltransferase</fullName>
        <ecNumber evidence="1">2.3.1.274</ecNumber>
    </recommendedName>
    <alternativeName>
        <fullName evidence="1">Acyl-ACP phosphotransacylase</fullName>
    </alternativeName>
    <alternativeName>
        <fullName evidence="1">Acyl-[acyl-carrier-protein]--phosphate acyltransferase</fullName>
    </alternativeName>
    <alternativeName>
        <fullName evidence="1">Phosphate-acyl-ACP acyltransferase</fullName>
    </alternativeName>
</protein>
<organism>
    <name type="scientific">Desulfitobacterium hafniense (strain DSM 10664 / DCB-2)</name>
    <dbReference type="NCBI Taxonomy" id="272564"/>
    <lineage>
        <taxon>Bacteria</taxon>
        <taxon>Bacillati</taxon>
        <taxon>Bacillota</taxon>
        <taxon>Clostridia</taxon>
        <taxon>Eubacteriales</taxon>
        <taxon>Desulfitobacteriaceae</taxon>
        <taxon>Desulfitobacterium</taxon>
    </lineage>
</organism>
<comment type="function">
    <text evidence="1">Catalyzes the reversible formation of acyl-phosphate (acyl-PO(4)) from acyl-[acyl-carrier-protein] (acyl-ACP). This enzyme utilizes acyl-ACP as fatty acyl donor, but not acyl-CoA.</text>
</comment>
<comment type="catalytic activity">
    <reaction evidence="1">
        <text>a fatty acyl-[ACP] + phosphate = an acyl phosphate + holo-[ACP]</text>
        <dbReference type="Rhea" id="RHEA:42292"/>
        <dbReference type="Rhea" id="RHEA-COMP:9685"/>
        <dbReference type="Rhea" id="RHEA-COMP:14125"/>
        <dbReference type="ChEBI" id="CHEBI:43474"/>
        <dbReference type="ChEBI" id="CHEBI:59918"/>
        <dbReference type="ChEBI" id="CHEBI:64479"/>
        <dbReference type="ChEBI" id="CHEBI:138651"/>
        <dbReference type="EC" id="2.3.1.274"/>
    </reaction>
</comment>
<comment type="pathway">
    <text evidence="1">Lipid metabolism; phospholipid metabolism.</text>
</comment>
<comment type="subunit">
    <text evidence="1">Homodimer. Probably interacts with PlsY.</text>
</comment>
<comment type="subcellular location">
    <subcellularLocation>
        <location evidence="1">Cytoplasm</location>
    </subcellularLocation>
    <text evidence="1">Associated with the membrane possibly through PlsY.</text>
</comment>
<comment type="similarity">
    <text evidence="1">Belongs to the PlsX family.</text>
</comment>
<evidence type="ECO:0000255" key="1">
    <source>
        <dbReference type="HAMAP-Rule" id="MF_00019"/>
    </source>
</evidence>
<gene>
    <name evidence="1" type="primary">plsX</name>
    <name type="ordered locus">Dhaf_3821</name>
</gene>
<name>PLSX_DESHD</name>
<sequence length="334" mass="35550">MRIAVDAMGGDHAPAEIVKGALRSIEQFDIEVILVGQPERIKEFLPQGEVPARVRIKEATEVVEMDEHPAQAVRRKKDSSIVVATRLVKEGEADALVSAGSTGAQMAASLLGLGRIKGIDRPAIVTVLPTLEGGKLLLDVGANPDAKPEHLLQYAMMGSIYAESILGIQNPKVGLLNIGTEETKGNELTQATYPLLQKAPLNFIGNVEGRAIPYGQAADVVVCEGFVGNVVLKTTEGLAGALFQLIKEKITATPLRKLGALAIKPGLKEIAKMMDYAEYGGAPLLGVNGISIISHGSSNEKAIFNAIRVAKECVESGFIEEIKKELPRFTAAQE</sequence>